<proteinExistence type="inferred from homology"/>
<feature type="chain" id="PRO_1000046847" description="Cobalt-precorrin-5B C(1)-methyltransferase">
    <location>
        <begin position="1"/>
        <end position="375"/>
    </location>
</feature>
<reference key="1">
    <citation type="submission" date="2006-12" db="EMBL/GenBank/DDBJ databases">
        <title>Complete sequence of Acidovorax avenae subsp. citrulli AAC00-1.</title>
        <authorList>
            <person name="Copeland A."/>
            <person name="Lucas S."/>
            <person name="Lapidus A."/>
            <person name="Barry K."/>
            <person name="Detter J.C."/>
            <person name="Glavina del Rio T."/>
            <person name="Dalin E."/>
            <person name="Tice H."/>
            <person name="Pitluck S."/>
            <person name="Kiss H."/>
            <person name="Brettin T."/>
            <person name="Bruce D."/>
            <person name="Han C."/>
            <person name="Tapia R."/>
            <person name="Gilna P."/>
            <person name="Schmutz J."/>
            <person name="Larimer F."/>
            <person name="Land M."/>
            <person name="Hauser L."/>
            <person name="Kyrpides N."/>
            <person name="Kim E."/>
            <person name="Stahl D."/>
            <person name="Richardson P."/>
        </authorList>
    </citation>
    <scope>NUCLEOTIDE SEQUENCE [LARGE SCALE GENOMIC DNA]</scope>
    <source>
        <strain>AAC00-1</strain>
    </source>
</reference>
<name>CBID_PARC0</name>
<evidence type="ECO:0000255" key="1">
    <source>
        <dbReference type="HAMAP-Rule" id="MF_00787"/>
    </source>
</evidence>
<protein>
    <recommendedName>
        <fullName evidence="1">Cobalt-precorrin-5B C(1)-methyltransferase</fullName>
        <ecNumber evidence="1">2.1.1.195</ecNumber>
    </recommendedName>
    <alternativeName>
        <fullName evidence="1">Cobalt-precorrin-6A synthase</fullName>
    </alternativeName>
</protein>
<gene>
    <name evidence="1" type="primary">cbiD</name>
    <name type="ordered locus">Aave_0071</name>
</gene>
<sequence>MMEKTVRRGTRTGFTTGACSAAAARAAVLGLVEGAVPEAVDCLLPNGDVVRFAVNDGACEAGQAAHAMVIKDAGDDPDCTDKAHLTADVRVLPGRAGEVVLCGGFGVGTVTMAGLGLEVGGPAINPVPRRNIEENVRAVGGPLLANAGIEVTISVPQGVEMARKTLNARLGILGGISILGTTGIVKPYSTSAYRASVVQGVQVAATLGHGVVVLTTGGRTEQFAMKERPELPAACFVQMGDFLRYALDEAVAQGLREVVIGGMVGKLTKIAQGETITHANRAEVDTQLLAELAARVGAPPDVCAEIAAAETARFGAERMQALGLGEPFHHALAQAVVQTLTAPDRYGDRFHLTVLVCDFDGSKITEAASGPAATA</sequence>
<organism>
    <name type="scientific">Paracidovorax citrulli (strain AAC00-1)</name>
    <name type="common">Acidovorax citrulli</name>
    <dbReference type="NCBI Taxonomy" id="397945"/>
    <lineage>
        <taxon>Bacteria</taxon>
        <taxon>Pseudomonadati</taxon>
        <taxon>Pseudomonadota</taxon>
        <taxon>Betaproteobacteria</taxon>
        <taxon>Burkholderiales</taxon>
        <taxon>Comamonadaceae</taxon>
        <taxon>Paracidovorax</taxon>
    </lineage>
</organism>
<keyword id="KW-0169">Cobalamin biosynthesis</keyword>
<keyword id="KW-0489">Methyltransferase</keyword>
<keyword id="KW-0949">S-adenosyl-L-methionine</keyword>
<keyword id="KW-0808">Transferase</keyword>
<dbReference type="EC" id="2.1.1.195" evidence="1"/>
<dbReference type="EMBL" id="CP000512">
    <property type="protein sequence ID" value="ABM30685.1"/>
    <property type="molecule type" value="Genomic_DNA"/>
</dbReference>
<dbReference type="RefSeq" id="WP_011793263.1">
    <property type="nucleotide sequence ID" value="NC_008752.1"/>
</dbReference>
<dbReference type="SMR" id="A1TI97"/>
<dbReference type="STRING" id="397945.Aave_0071"/>
<dbReference type="GeneID" id="79789866"/>
<dbReference type="KEGG" id="aav:Aave_0071"/>
<dbReference type="eggNOG" id="COG1903">
    <property type="taxonomic scope" value="Bacteria"/>
</dbReference>
<dbReference type="HOGENOM" id="CLU_041273_0_0_4"/>
<dbReference type="OrthoDB" id="6439987at2"/>
<dbReference type="UniPathway" id="UPA00148">
    <property type="reaction ID" value="UER00227"/>
</dbReference>
<dbReference type="Proteomes" id="UP000002596">
    <property type="component" value="Chromosome"/>
</dbReference>
<dbReference type="GO" id="GO:0043780">
    <property type="term" value="F:cobalt-precorrin-5B C1-methyltransferase activity"/>
    <property type="evidence" value="ECO:0007669"/>
    <property type="project" value="RHEA"/>
</dbReference>
<dbReference type="GO" id="GO:0019251">
    <property type="term" value="P:anaerobic cobalamin biosynthetic process"/>
    <property type="evidence" value="ECO:0007669"/>
    <property type="project" value="UniProtKB-UniRule"/>
</dbReference>
<dbReference type="GO" id="GO:0032259">
    <property type="term" value="P:methylation"/>
    <property type="evidence" value="ECO:0007669"/>
    <property type="project" value="UniProtKB-KW"/>
</dbReference>
<dbReference type="Gene3D" id="3.30.2110.10">
    <property type="entry name" value="CbiD-like"/>
    <property type="match status" value="1"/>
</dbReference>
<dbReference type="HAMAP" id="MF_00787">
    <property type="entry name" value="CbiD"/>
    <property type="match status" value="1"/>
</dbReference>
<dbReference type="InterPro" id="IPR002748">
    <property type="entry name" value="CbiD"/>
</dbReference>
<dbReference type="InterPro" id="IPR036074">
    <property type="entry name" value="CbiD_sf"/>
</dbReference>
<dbReference type="NCBIfam" id="TIGR00312">
    <property type="entry name" value="cbiD"/>
    <property type="match status" value="1"/>
</dbReference>
<dbReference type="NCBIfam" id="NF000849">
    <property type="entry name" value="PRK00075.1-1"/>
    <property type="match status" value="1"/>
</dbReference>
<dbReference type="PANTHER" id="PTHR35863">
    <property type="entry name" value="COBALT-PRECORRIN-5B C(1)-METHYLTRANSFERASE"/>
    <property type="match status" value="1"/>
</dbReference>
<dbReference type="PANTHER" id="PTHR35863:SF1">
    <property type="entry name" value="COBALT-PRECORRIN-5B C(1)-METHYLTRANSFERASE"/>
    <property type="match status" value="1"/>
</dbReference>
<dbReference type="Pfam" id="PF01888">
    <property type="entry name" value="CbiD"/>
    <property type="match status" value="1"/>
</dbReference>
<dbReference type="PIRSF" id="PIRSF026782">
    <property type="entry name" value="CbiD"/>
    <property type="match status" value="1"/>
</dbReference>
<dbReference type="SUPFAM" id="SSF111342">
    <property type="entry name" value="CbiD-like"/>
    <property type="match status" value="1"/>
</dbReference>
<comment type="function">
    <text evidence="1">Catalyzes the methylation of C-1 in cobalt-precorrin-5B to form cobalt-precorrin-6A.</text>
</comment>
<comment type="catalytic activity">
    <reaction evidence="1">
        <text>Co-precorrin-5B + S-adenosyl-L-methionine = Co-precorrin-6A + S-adenosyl-L-homocysteine</text>
        <dbReference type="Rhea" id="RHEA:26285"/>
        <dbReference type="ChEBI" id="CHEBI:57856"/>
        <dbReference type="ChEBI" id="CHEBI:59789"/>
        <dbReference type="ChEBI" id="CHEBI:60063"/>
        <dbReference type="ChEBI" id="CHEBI:60064"/>
        <dbReference type="EC" id="2.1.1.195"/>
    </reaction>
</comment>
<comment type="pathway">
    <text evidence="1">Cofactor biosynthesis; adenosylcobalamin biosynthesis; cob(II)yrinate a,c-diamide from sirohydrochlorin (anaerobic route): step 6/10.</text>
</comment>
<comment type="similarity">
    <text evidence="1">Belongs to the CbiD family.</text>
</comment>
<accession>A1TI97</accession>